<organism>
    <name type="scientific">Francisella tularensis subsp. tularensis (strain WY96-3418)</name>
    <dbReference type="NCBI Taxonomy" id="418136"/>
    <lineage>
        <taxon>Bacteria</taxon>
        <taxon>Pseudomonadati</taxon>
        <taxon>Pseudomonadota</taxon>
        <taxon>Gammaproteobacteria</taxon>
        <taxon>Thiotrichales</taxon>
        <taxon>Francisellaceae</taxon>
        <taxon>Francisella</taxon>
    </lineage>
</organism>
<sequence>MNRLKKGDDVIVIAGKDKGRRGVVKSFAKGGSLVLVEGINIVKKHIKPNPNRGIEDGVVEKELPVDASNVAIFNPATEKADRVGYKFVDEKKVRYFKSNGELVDL</sequence>
<evidence type="ECO:0000255" key="1">
    <source>
        <dbReference type="HAMAP-Rule" id="MF_01326"/>
    </source>
</evidence>
<evidence type="ECO:0000305" key="2"/>
<reference key="1">
    <citation type="journal article" date="2007" name="PLoS ONE">
        <title>Complete genomic characterization of a pathogenic A.II strain of Francisella tularensis subspecies tularensis.</title>
        <authorList>
            <person name="Beckstrom-Sternberg S.M."/>
            <person name="Auerbach R.K."/>
            <person name="Godbole S."/>
            <person name="Pearson J.V."/>
            <person name="Beckstrom-Sternberg J.S."/>
            <person name="Deng Z."/>
            <person name="Munk C."/>
            <person name="Kubota K."/>
            <person name="Zhou Y."/>
            <person name="Bruce D."/>
            <person name="Noronha J."/>
            <person name="Scheuermann R.H."/>
            <person name="Wang A."/>
            <person name="Wei X."/>
            <person name="Wang J."/>
            <person name="Hao J."/>
            <person name="Wagner D.M."/>
            <person name="Brettin T.S."/>
            <person name="Brown N."/>
            <person name="Gilna P."/>
            <person name="Keim P.S."/>
        </authorList>
    </citation>
    <scope>NUCLEOTIDE SEQUENCE [LARGE SCALE GENOMIC DNA]</scope>
    <source>
        <strain>WY96-3418</strain>
    </source>
</reference>
<gene>
    <name evidence="1" type="primary">rplX</name>
    <name type="ordered locus">FTW_1747</name>
</gene>
<proteinExistence type="inferred from homology"/>
<feature type="chain" id="PRO_1000052219" description="Large ribosomal subunit protein uL24">
    <location>
        <begin position="1"/>
        <end position="105"/>
    </location>
</feature>
<comment type="function">
    <text evidence="1">One of two assembly initiator proteins, it binds directly to the 5'-end of the 23S rRNA, where it nucleates assembly of the 50S subunit.</text>
</comment>
<comment type="function">
    <text evidence="1">One of the proteins that surrounds the polypeptide exit tunnel on the outside of the subunit.</text>
</comment>
<comment type="subunit">
    <text evidence="1">Part of the 50S ribosomal subunit.</text>
</comment>
<comment type="similarity">
    <text evidence="1">Belongs to the universal ribosomal protein uL24 family.</text>
</comment>
<dbReference type="EMBL" id="CP000608">
    <property type="protein sequence ID" value="ABO47423.1"/>
    <property type="molecule type" value="Genomic_DNA"/>
</dbReference>
<dbReference type="RefSeq" id="WP_003021594.1">
    <property type="nucleotide sequence ID" value="NC_009257.1"/>
</dbReference>
<dbReference type="SMR" id="A4IZS3"/>
<dbReference type="KEGG" id="ftw:FTW_1747"/>
<dbReference type="HOGENOM" id="CLU_093315_2_2_6"/>
<dbReference type="GO" id="GO:1990904">
    <property type="term" value="C:ribonucleoprotein complex"/>
    <property type="evidence" value="ECO:0007669"/>
    <property type="project" value="UniProtKB-KW"/>
</dbReference>
<dbReference type="GO" id="GO:0005840">
    <property type="term" value="C:ribosome"/>
    <property type="evidence" value="ECO:0007669"/>
    <property type="project" value="UniProtKB-KW"/>
</dbReference>
<dbReference type="GO" id="GO:0019843">
    <property type="term" value="F:rRNA binding"/>
    <property type="evidence" value="ECO:0007669"/>
    <property type="project" value="UniProtKB-UniRule"/>
</dbReference>
<dbReference type="GO" id="GO:0003735">
    <property type="term" value="F:structural constituent of ribosome"/>
    <property type="evidence" value="ECO:0007669"/>
    <property type="project" value="InterPro"/>
</dbReference>
<dbReference type="GO" id="GO:0006412">
    <property type="term" value="P:translation"/>
    <property type="evidence" value="ECO:0007669"/>
    <property type="project" value="UniProtKB-UniRule"/>
</dbReference>
<dbReference type="CDD" id="cd06089">
    <property type="entry name" value="KOW_RPL26"/>
    <property type="match status" value="1"/>
</dbReference>
<dbReference type="FunFam" id="2.30.30.30:FF:000004">
    <property type="entry name" value="50S ribosomal protein L24"/>
    <property type="match status" value="1"/>
</dbReference>
<dbReference type="Gene3D" id="2.30.30.30">
    <property type="match status" value="1"/>
</dbReference>
<dbReference type="HAMAP" id="MF_01326_B">
    <property type="entry name" value="Ribosomal_uL24_B"/>
    <property type="match status" value="1"/>
</dbReference>
<dbReference type="InterPro" id="IPR005824">
    <property type="entry name" value="KOW"/>
</dbReference>
<dbReference type="InterPro" id="IPR014722">
    <property type="entry name" value="Rib_uL2_dom2"/>
</dbReference>
<dbReference type="InterPro" id="IPR003256">
    <property type="entry name" value="Ribosomal_uL24"/>
</dbReference>
<dbReference type="InterPro" id="IPR005825">
    <property type="entry name" value="Ribosomal_uL24_CS"/>
</dbReference>
<dbReference type="InterPro" id="IPR041988">
    <property type="entry name" value="Ribosomal_uL24_KOW"/>
</dbReference>
<dbReference type="InterPro" id="IPR008991">
    <property type="entry name" value="Translation_prot_SH3-like_sf"/>
</dbReference>
<dbReference type="NCBIfam" id="TIGR01079">
    <property type="entry name" value="rplX_bact"/>
    <property type="match status" value="1"/>
</dbReference>
<dbReference type="PANTHER" id="PTHR12903">
    <property type="entry name" value="MITOCHONDRIAL RIBOSOMAL PROTEIN L24"/>
    <property type="match status" value="1"/>
</dbReference>
<dbReference type="Pfam" id="PF00467">
    <property type="entry name" value="KOW"/>
    <property type="match status" value="1"/>
</dbReference>
<dbReference type="Pfam" id="PF17136">
    <property type="entry name" value="ribosomal_L24"/>
    <property type="match status" value="1"/>
</dbReference>
<dbReference type="SUPFAM" id="SSF50104">
    <property type="entry name" value="Translation proteins SH3-like domain"/>
    <property type="match status" value="1"/>
</dbReference>
<dbReference type="PROSITE" id="PS01108">
    <property type="entry name" value="RIBOSOMAL_L24"/>
    <property type="match status" value="1"/>
</dbReference>
<name>RL24_FRATW</name>
<accession>A4IZS3</accession>
<keyword id="KW-0687">Ribonucleoprotein</keyword>
<keyword id="KW-0689">Ribosomal protein</keyword>
<keyword id="KW-0694">RNA-binding</keyword>
<keyword id="KW-0699">rRNA-binding</keyword>
<protein>
    <recommendedName>
        <fullName evidence="1">Large ribosomal subunit protein uL24</fullName>
    </recommendedName>
    <alternativeName>
        <fullName evidence="2">50S ribosomal protein L24</fullName>
    </alternativeName>
</protein>